<reference key="1">
    <citation type="submission" date="2006-02" db="EMBL/GenBank/DDBJ databases">
        <title>Molecular cloning and characterization of a maize retinoblastoma-related gene.</title>
        <authorList>
            <person name="Plasencia J."/>
            <person name="Najera-Martinez M."/>
            <person name="Vazquez-Ramos J.M."/>
            <person name="Ramirez-Parra E."/>
            <person name="Gutierrez C."/>
        </authorList>
    </citation>
    <scope>NUCLEOTIDE SEQUENCE [GENOMIC DNA]</scope>
</reference>
<reference key="2">
    <citation type="journal article" date="1997" name="Mol. Cell. Biol.">
        <title>RRB1 and RRB2 encode maize retinoblastoma-related proteins that interact with a plant D-type cyclin and geminivirus replication protein.</title>
        <authorList>
            <person name="Ach R.A."/>
            <person name="Durfee T."/>
            <person name="Miller A.B."/>
            <person name="Taranto P."/>
            <person name="Hanley-Bowdoin L."/>
            <person name="Zambryski P.C."/>
            <person name="Gruissem W."/>
        </authorList>
    </citation>
    <scope>NUCLEOTIDE SEQUENCE [MRNA] OF 256-866 (ISOFORMS 1 AND 2)</scope>
    <scope>TISSUE SPECIFICITY</scope>
    <scope>ALTERNATIVE SPLICING</scope>
    <source>
        <strain>cv. B73</strain>
    </source>
</reference>
<reference key="3">
    <citation type="journal article" date="2007" name="J. Exp. Bot.">
        <title>Dicot and monocot plants differ in retinoblastoma-related protein subfamilies.</title>
        <authorList>
            <person name="Lendvai A."/>
            <person name="Pettko-Szandtner A."/>
            <person name="Csordas-Toth E."/>
            <person name="Miskolczi P."/>
            <person name="Horvath G.V."/>
            <person name="Gyoergyey J."/>
            <person name="Dudits D."/>
        </authorList>
    </citation>
    <scope>GENE FAMILY</scope>
    <scope>NOMENCLATURE</scope>
</reference>
<name>RBR2_MAIZE</name>
<gene>
    <name type="primary">RBR2</name>
    <name type="synonym">RRB2</name>
</gene>
<feature type="chain" id="PRO_0000335247" description="Retinoblastoma-related protein 2">
    <location>
        <begin position="1"/>
        <end position="866"/>
    </location>
</feature>
<feature type="region of interest" description="Pocket">
    <location>
        <begin position="274"/>
        <end position="721"/>
    </location>
</feature>
<feature type="region of interest" description="Domain A">
    <location>
        <begin position="274"/>
        <end position="475"/>
    </location>
</feature>
<feature type="region of interest" description="Spacer">
    <location>
        <begin position="476"/>
        <end position="593"/>
    </location>
</feature>
<feature type="region of interest" description="Disordered" evidence="2">
    <location>
        <begin position="513"/>
        <end position="551"/>
    </location>
</feature>
<feature type="region of interest" description="Domain B">
    <location>
        <begin position="594"/>
        <end position="721"/>
    </location>
</feature>
<feature type="region of interest" description="Disordered" evidence="2">
    <location>
        <begin position="731"/>
        <end position="754"/>
    </location>
</feature>
<feature type="region of interest" description="Disordered" evidence="2">
    <location>
        <begin position="839"/>
        <end position="866"/>
    </location>
</feature>
<feature type="compositionally biased region" description="Basic and acidic residues" evidence="2">
    <location>
        <begin position="523"/>
        <end position="539"/>
    </location>
</feature>
<feature type="compositionally biased region" description="Polar residues" evidence="2">
    <location>
        <begin position="841"/>
        <end position="850"/>
    </location>
</feature>
<feature type="splice variant" id="VSP_033764" description="In isoform 2." evidence="4">
    <original>SDSVVAGS</original>
    <variation>CLMLTLLL</variation>
    <location>
        <begin position="832"/>
        <end position="839"/>
    </location>
</feature>
<feature type="splice variant" id="VSP_033765" description="In isoform 2." evidence="4">
    <location>
        <begin position="840"/>
        <end position="866"/>
    </location>
</feature>
<feature type="sequence conflict" description="In Ref. 2; AAB69651." evidence="5" ref="2">
    <original>C</original>
    <variation>G</variation>
    <location>
        <position position="266"/>
    </location>
</feature>
<feature type="sequence conflict" description="In Ref. 2; AAB69651." evidence="5" ref="2">
    <original>Y</original>
    <variation>N</variation>
    <location>
        <position position="314"/>
    </location>
</feature>
<feature type="sequence conflict" description="In Ref. 2; AAB69651." evidence="5" ref="2">
    <original>DV</original>
    <variation>EL</variation>
    <location>
        <begin position="403"/>
        <end position="404"/>
    </location>
</feature>
<feature type="sequence conflict" description="In Ref. 2; AAB69651." evidence="5" ref="2">
    <original>A</original>
    <variation>T</variation>
    <location>
        <position position="423"/>
    </location>
</feature>
<feature type="sequence conflict" description="In Ref. 2; AAB69650/AAB69651." evidence="5" ref="2">
    <original>P</original>
    <variation>T</variation>
    <location>
        <position position="544"/>
    </location>
</feature>
<feature type="sequence conflict" description="In Ref. 2; AAB69650/AAB69651." evidence="5" ref="2">
    <original>ID</original>
    <variation>MH</variation>
    <location>
        <begin position="647"/>
        <end position="648"/>
    </location>
</feature>
<dbReference type="EMBL" id="AJ279062">
    <property type="protein sequence ID" value="CAC82493.1"/>
    <property type="molecule type" value="Genomic_DNA"/>
</dbReference>
<dbReference type="EMBL" id="AF007795">
    <property type="protein sequence ID" value="AAB69651.1"/>
    <property type="molecule type" value="mRNA"/>
</dbReference>
<dbReference type="EMBL" id="AF007794">
    <property type="protein sequence ID" value="AAB69650.1"/>
    <property type="molecule type" value="mRNA"/>
</dbReference>
<dbReference type="PIR" id="T01172">
    <property type="entry name" value="T01172"/>
</dbReference>
<dbReference type="PIR" id="T01173">
    <property type="entry name" value="T01173"/>
</dbReference>
<dbReference type="SMR" id="Q8H0J6"/>
<dbReference type="FunCoup" id="Q8H0J6">
    <property type="interactions" value="1634"/>
</dbReference>
<dbReference type="STRING" id="4577.Q8H0J6"/>
<dbReference type="PaxDb" id="4577-GRMZM2G153150_P01"/>
<dbReference type="MaizeGDB" id="273693"/>
<dbReference type="eggNOG" id="KOG1010">
    <property type="taxonomic scope" value="Eukaryota"/>
</dbReference>
<dbReference type="InParanoid" id="Q8H0J6"/>
<dbReference type="Proteomes" id="UP000007305">
    <property type="component" value="Unplaced"/>
</dbReference>
<dbReference type="ExpressionAtlas" id="Q8H0J6">
    <property type="expression patterns" value="baseline and differential"/>
</dbReference>
<dbReference type="GO" id="GO:0000785">
    <property type="term" value="C:chromatin"/>
    <property type="evidence" value="ECO:0000318"/>
    <property type="project" value="GO_Central"/>
</dbReference>
<dbReference type="GO" id="GO:0005634">
    <property type="term" value="C:nucleus"/>
    <property type="evidence" value="ECO:0007669"/>
    <property type="project" value="UniProtKB-SubCell"/>
</dbReference>
<dbReference type="GO" id="GO:0005667">
    <property type="term" value="C:transcription regulator complex"/>
    <property type="evidence" value="ECO:0000318"/>
    <property type="project" value="GO_Central"/>
</dbReference>
<dbReference type="GO" id="GO:0000977">
    <property type="term" value="F:RNA polymerase II transcription regulatory region sequence-specific DNA binding"/>
    <property type="evidence" value="ECO:0000318"/>
    <property type="project" value="GO_Central"/>
</dbReference>
<dbReference type="GO" id="GO:0030154">
    <property type="term" value="P:cell differentiation"/>
    <property type="evidence" value="ECO:0000318"/>
    <property type="project" value="GO_Central"/>
</dbReference>
<dbReference type="GO" id="GO:2000134">
    <property type="term" value="P:negative regulation of G1/S transition of mitotic cell cycle"/>
    <property type="evidence" value="ECO:0000318"/>
    <property type="project" value="GO_Central"/>
</dbReference>
<dbReference type="GO" id="GO:0006357">
    <property type="term" value="P:regulation of transcription by RNA polymerase II"/>
    <property type="evidence" value="ECO:0007669"/>
    <property type="project" value="InterPro"/>
</dbReference>
<dbReference type="FunFam" id="1.10.472.10:FF:000030">
    <property type="entry name" value="Retinoblastoma-related protein 1"/>
    <property type="match status" value="1"/>
</dbReference>
<dbReference type="FunFam" id="1.10.472.10:FF:000075">
    <property type="entry name" value="Retinoblastoma-related protein 2"/>
    <property type="match status" value="1"/>
</dbReference>
<dbReference type="Gene3D" id="1.10.472.10">
    <property type="entry name" value="Cyclin-like"/>
    <property type="match status" value="2"/>
</dbReference>
<dbReference type="InterPro" id="IPR036915">
    <property type="entry name" value="Cyclin-like_sf"/>
</dbReference>
<dbReference type="InterPro" id="IPR002720">
    <property type="entry name" value="RB_A"/>
</dbReference>
<dbReference type="InterPro" id="IPR002719">
    <property type="entry name" value="RB_B"/>
</dbReference>
<dbReference type="InterPro" id="IPR028309">
    <property type="entry name" value="RB_fam"/>
</dbReference>
<dbReference type="InterPro" id="IPR024599">
    <property type="entry name" value="RB_N"/>
</dbReference>
<dbReference type="PANTHER" id="PTHR13742">
    <property type="entry name" value="RETINOBLASTOMA-ASSOCIATED PROTEIN RB -RELATED"/>
    <property type="match status" value="1"/>
</dbReference>
<dbReference type="PANTHER" id="PTHR13742:SF22">
    <property type="entry name" value="RETINOBLASTOMA-RELATED PROTEIN 2"/>
    <property type="match status" value="1"/>
</dbReference>
<dbReference type="Pfam" id="PF11934">
    <property type="entry name" value="DUF3452"/>
    <property type="match status" value="1"/>
</dbReference>
<dbReference type="Pfam" id="PF01858">
    <property type="entry name" value="RB_A"/>
    <property type="match status" value="1"/>
</dbReference>
<dbReference type="Pfam" id="PF01857">
    <property type="entry name" value="RB_B"/>
    <property type="match status" value="1"/>
</dbReference>
<dbReference type="SMART" id="SM01368">
    <property type="entry name" value="RB_A"/>
    <property type="match status" value="1"/>
</dbReference>
<dbReference type="SUPFAM" id="SSF47954">
    <property type="entry name" value="Cyclin-like"/>
    <property type="match status" value="2"/>
</dbReference>
<evidence type="ECO:0000250" key="1"/>
<evidence type="ECO:0000256" key="2">
    <source>
        <dbReference type="SAM" id="MobiDB-lite"/>
    </source>
</evidence>
<evidence type="ECO:0000269" key="3">
    <source>
    </source>
</evidence>
<evidence type="ECO:0000303" key="4">
    <source>
    </source>
</evidence>
<evidence type="ECO:0000305" key="5"/>
<proteinExistence type="evidence at transcript level"/>
<sequence length="866" mass="96532">MSSQDPPPATSTQKKQSESLVNLLAEASRFYRKAYNELFSGLITEWEPESSTNIPDYMLFGWHLFLNLRLRSPELFKDLVSCIHGLVAVLAILLVHVPAKFRTFTIEGSSHLIKQTEKGVDLIASLCHNYHTSEECLKEMMDKSHKAIEEVFSMKALSASECKTENLDKIDTDRLMYFKGLIDMECFQSNLEKIEKLCNSNNCEAELDFKLILTNNDYIPCAENLSRDSTNLGCSKCAFETLASPRKTIKNMLTVPSSPLSPTNGCSVKIVQMTPITSAMTTAKWLREVISSLPEKPSSKLQQLMSSCDRDLTYAVTERVSIVLEAIFPTKSSADRGGSLGLNCANAFDTLWADARKMEASKLYYRVLEAICRAELQNSNVNNLTPLLSNERFHRCLIACSADVVLATHKTVIMMFPAVLESAGLTSFDLSKIIENFVRHEETLPRELKRHLNSLEEQILESMAWEKGSSLYNSLIVARPSVASEINRFGLLAESMPSLDDLVARQNIHIEGLPATPSKKRAAGRDDNADPRSPKRPCNESRSPVVEHNLQTPPPKQCHMVLTSLKAKCHPLQSTFASPTVSNPVGGNEKCADVTIQIFFSKILKLAAIRIRNLCERIQYMEQTERVYNVFKQILDQQTTLFFNRHIDQLILCCLYGVAKVCQLELSFREILNNYKKEAQCKPEVFLSIYIGSRNHNGVLISRHVDIITFYNEVFVPAAKPFLVSLISSGTRPEDKKNASGQVPGSPKLSPFPNLPDMSPKKVSASHNVYVSPLRQTKMDLLLSPSSRSFYACIGEGTHAYQSPSKDLAAINSRLNYNGRRVNSRLNFDMVSDSVVAGSLGQPNGGSTSLDPAAAFSPLSKRKPDT</sequence>
<protein>
    <recommendedName>
        <fullName>Retinoblastoma-related protein 2</fullName>
        <shortName>ZmRBR2</shortName>
    </recommendedName>
</protein>
<organism>
    <name type="scientific">Zea mays</name>
    <name type="common">Maize</name>
    <dbReference type="NCBI Taxonomy" id="4577"/>
    <lineage>
        <taxon>Eukaryota</taxon>
        <taxon>Viridiplantae</taxon>
        <taxon>Streptophyta</taxon>
        <taxon>Embryophyta</taxon>
        <taxon>Tracheophyta</taxon>
        <taxon>Spermatophyta</taxon>
        <taxon>Magnoliopsida</taxon>
        <taxon>Liliopsida</taxon>
        <taxon>Poales</taxon>
        <taxon>Poaceae</taxon>
        <taxon>PACMAD clade</taxon>
        <taxon>Panicoideae</taxon>
        <taxon>Andropogonodae</taxon>
        <taxon>Andropogoneae</taxon>
        <taxon>Tripsacinae</taxon>
        <taxon>Zea</taxon>
    </lineage>
</organism>
<keyword id="KW-0025">Alternative splicing</keyword>
<keyword id="KW-0131">Cell cycle</keyword>
<keyword id="KW-0539">Nucleus</keyword>
<keyword id="KW-1185">Reference proteome</keyword>
<keyword id="KW-0678">Repressor</keyword>
<keyword id="KW-0804">Transcription</keyword>
<keyword id="KW-0805">Transcription regulation</keyword>
<accession>Q8H0J6</accession>
<accession>O22345</accession>
<accession>O22346</accession>
<comment type="function">
    <text evidence="1">Regulator of biological processes that recruits a histone deacetylase to control gene transcription. May play a role in the entry into mitosis, negatively regulating the cell proliferation. Formation of stable complexes with geminiviridae replication-associated proteins may create a cellular environment which favors viral DNA replication (By similarity).</text>
</comment>
<comment type="subcellular location">
    <subcellularLocation>
        <location evidence="1">Nucleus</location>
    </subcellularLocation>
</comment>
<comment type="alternative products">
    <event type="alternative splicing"/>
    <isoform>
        <id>Q8H0J6-1</id>
        <name>1</name>
        <name>2a</name>
        <sequence type="displayed"/>
    </isoform>
    <isoform>
        <id>Q8H0J6-2</id>
        <name>2</name>
        <name>2b</name>
        <sequence type="described" ref="VSP_033764 VSP_033765"/>
    </isoform>
</comment>
<comment type="tissue specificity">
    <text evidence="3">Ubiquitous.</text>
</comment>
<comment type="similarity">
    <text evidence="5">Belongs to the retinoblastoma protein (RB) family.</text>
</comment>